<gene>
    <name evidence="1" type="primary">Tango7</name>
    <name type="ORF">GL10828</name>
</gene>
<name>EIF3M_DROPE</name>
<feature type="chain" id="PRO_0000366002" description="Eukaryotic translation initiation factor 3 subunit M">
    <location>
        <begin position="1"/>
        <end position="387"/>
    </location>
</feature>
<feature type="domain" description="PCI" evidence="2">
    <location>
        <begin position="181"/>
        <end position="340"/>
    </location>
</feature>
<accession>B4GDM5</accession>
<evidence type="ECO:0000255" key="1">
    <source>
        <dbReference type="HAMAP-Rule" id="MF_03012"/>
    </source>
</evidence>
<evidence type="ECO:0000255" key="2">
    <source>
        <dbReference type="PROSITE-ProRule" id="PRU01185"/>
    </source>
</evidence>
<dbReference type="EMBL" id="CH479181">
    <property type="protein sequence ID" value="EDW31682.1"/>
    <property type="molecule type" value="Genomic_DNA"/>
</dbReference>
<dbReference type="SMR" id="B4GDM5"/>
<dbReference type="STRING" id="7234.B4GDM5"/>
<dbReference type="EnsemblMetazoa" id="FBtr0176443">
    <property type="protein sequence ID" value="FBpp0174935"/>
    <property type="gene ID" value="FBgn0148438"/>
</dbReference>
<dbReference type="EnsemblMetazoa" id="XM_002015756.2">
    <property type="protein sequence ID" value="XP_002015792.1"/>
    <property type="gene ID" value="LOC6591249"/>
</dbReference>
<dbReference type="GeneID" id="6591249"/>
<dbReference type="KEGG" id="dpe:6591249"/>
<dbReference type="CTD" id="10480"/>
<dbReference type="eggNOG" id="KOG2753">
    <property type="taxonomic scope" value="Eukaryota"/>
</dbReference>
<dbReference type="HOGENOM" id="CLU_035254_1_0_1"/>
<dbReference type="OMA" id="VCLKALW"/>
<dbReference type="OrthoDB" id="7900529at2759"/>
<dbReference type="PhylomeDB" id="B4GDM5"/>
<dbReference type="Proteomes" id="UP000008744">
    <property type="component" value="Unassembled WGS sequence"/>
</dbReference>
<dbReference type="GO" id="GO:0005829">
    <property type="term" value="C:cytosol"/>
    <property type="evidence" value="ECO:0007669"/>
    <property type="project" value="EnsemblMetazoa"/>
</dbReference>
<dbReference type="GO" id="GO:0016282">
    <property type="term" value="C:eukaryotic 43S preinitiation complex"/>
    <property type="evidence" value="ECO:0007669"/>
    <property type="project" value="UniProtKB-UniRule"/>
</dbReference>
<dbReference type="GO" id="GO:0033290">
    <property type="term" value="C:eukaryotic 48S preinitiation complex"/>
    <property type="evidence" value="ECO:0007669"/>
    <property type="project" value="UniProtKB-UniRule"/>
</dbReference>
<dbReference type="GO" id="GO:0071541">
    <property type="term" value="C:eukaryotic translation initiation factor 3 complex, eIF3m"/>
    <property type="evidence" value="ECO:0007669"/>
    <property type="project" value="UniProtKB-UniRule"/>
</dbReference>
<dbReference type="GO" id="GO:0005794">
    <property type="term" value="C:Golgi apparatus"/>
    <property type="evidence" value="ECO:0007669"/>
    <property type="project" value="UniProtKB-SubCell"/>
</dbReference>
<dbReference type="GO" id="GO:0070865">
    <property type="term" value="C:investment cone"/>
    <property type="evidence" value="ECO:0007669"/>
    <property type="project" value="EnsemblMetazoa"/>
</dbReference>
<dbReference type="GO" id="GO:0089720">
    <property type="term" value="F:caspase binding"/>
    <property type="evidence" value="ECO:0007669"/>
    <property type="project" value="EnsemblMetazoa"/>
</dbReference>
<dbReference type="GO" id="GO:0140608">
    <property type="term" value="F:cysteine-type endopeptidase activator activity"/>
    <property type="evidence" value="ECO:0007669"/>
    <property type="project" value="EnsemblMetazoa"/>
</dbReference>
<dbReference type="GO" id="GO:0003743">
    <property type="term" value="F:translation initiation factor activity"/>
    <property type="evidence" value="ECO:0007669"/>
    <property type="project" value="UniProtKB-UniRule"/>
</dbReference>
<dbReference type="GO" id="GO:0001732">
    <property type="term" value="P:formation of cytoplasmic translation initiation complex"/>
    <property type="evidence" value="ECO:0007669"/>
    <property type="project" value="UniProtKB-UniRule"/>
</dbReference>
<dbReference type="GO" id="GO:0007030">
    <property type="term" value="P:Golgi organization"/>
    <property type="evidence" value="ECO:0007669"/>
    <property type="project" value="EnsemblMetazoa"/>
</dbReference>
<dbReference type="GO" id="GO:0009306">
    <property type="term" value="P:protein secretion"/>
    <property type="evidence" value="ECO:0007669"/>
    <property type="project" value="EnsemblMetazoa"/>
</dbReference>
<dbReference type="GO" id="GO:0007291">
    <property type="term" value="P:sperm individualization"/>
    <property type="evidence" value="ECO:0007669"/>
    <property type="project" value="EnsemblMetazoa"/>
</dbReference>
<dbReference type="HAMAP" id="MF_03012">
    <property type="entry name" value="eIF3m"/>
    <property type="match status" value="1"/>
</dbReference>
<dbReference type="InterPro" id="IPR016024">
    <property type="entry name" value="ARM-type_fold"/>
</dbReference>
<dbReference type="InterPro" id="IPR045237">
    <property type="entry name" value="COPS7/eIF3m"/>
</dbReference>
<dbReference type="InterPro" id="IPR027528">
    <property type="entry name" value="eIF3m"/>
</dbReference>
<dbReference type="InterPro" id="IPR040750">
    <property type="entry name" value="eIF3m_C_helix"/>
</dbReference>
<dbReference type="InterPro" id="IPR000717">
    <property type="entry name" value="PCI_dom"/>
</dbReference>
<dbReference type="InterPro" id="IPR036390">
    <property type="entry name" value="WH_DNA-bd_sf"/>
</dbReference>
<dbReference type="PANTHER" id="PTHR15350">
    <property type="entry name" value="COP9 SIGNALOSOME COMPLEX SUBUNIT 7/DENDRITIC CELL PROTEIN GA17"/>
    <property type="match status" value="1"/>
</dbReference>
<dbReference type="PANTHER" id="PTHR15350:SF2">
    <property type="entry name" value="EUKARYOTIC TRANSLATION INITIATION FACTOR 3 SUBUNIT M"/>
    <property type="match status" value="1"/>
</dbReference>
<dbReference type="Pfam" id="PF18005">
    <property type="entry name" value="eIF3m_C_helix"/>
    <property type="match status" value="1"/>
</dbReference>
<dbReference type="Pfam" id="PF01399">
    <property type="entry name" value="PCI"/>
    <property type="match status" value="1"/>
</dbReference>
<dbReference type="SMART" id="SM00088">
    <property type="entry name" value="PINT"/>
    <property type="match status" value="1"/>
</dbReference>
<dbReference type="SUPFAM" id="SSF48371">
    <property type="entry name" value="ARM repeat"/>
    <property type="match status" value="1"/>
</dbReference>
<dbReference type="SUPFAM" id="SSF46785">
    <property type="entry name" value="Winged helix' DNA-binding domain"/>
    <property type="match status" value="1"/>
</dbReference>
<dbReference type="PROSITE" id="PS50250">
    <property type="entry name" value="PCI"/>
    <property type="match status" value="1"/>
</dbReference>
<protein>
    <recommendedName>
        <fullName evidence="1">Eukaryotic translation initiation factor 3 subunit M</fullName>
        <shortName evidence="1">eIF3m</shortName>
    </recommendedName>
    <alternativeName>
        <fullName evidence="1">Transport and Golgi organization protein 7</fullName>
        <shortName evidence="1">Tango-7</shortName>
    </alternativeName>
</protein>
<organism>
    <name type="scientific">Drosophila persimilis</name>
    <name type="common">Fruit fly</name>
    <dbReference type="NCBI Taxonomy" id="7234"/>
    <lineage>
        <taxon>Eukaryota</taxon>
        <taxon>Metazoa</taxon>
        <taxon>Ecdysozoa</taxon>
        <taxon>Arthropoda</taxon>
        <taxon>Hexapoda</taxon>
        <taxon>Insecta</taxon>
        <taxon>Pterygota</taxon>
        <taxon>Neoptera</taxon>
        <taxon>Endopterygota</taxon>
        <taxon>Diptera</taxon>
        <taxon>Brachycera</taxon>
        <taxon>Muscomorpha</taxon>
        <taxon>Ephydroidea</taxon>
        <taxon>Drosophilidae</taxon>
        <taxon>Drosophila</taxon>
        <taxon>Sophophora</taxon>
    </lineage>
</organism>
<proteinExistence type="inferred from homology"/>
<comment type="function">
    <text evidence="1">Component of the eukaryotic translation initiation factor 3 (eIF-3) complex, which is involved in protein synthesis of a specialized repertoire of mRNAs and, together with other initiation factors, stimulates binding of mRNA and methionyl-tRNAi to the 40S ribosome. The eIF-3 complex specifically targets and initiates translation of a subset of mRNAs involved in cell proliferation.</text>
</comment>
<comment type="subunit">
    <text evidence="1">Component of the eukaryotic translation initiation factor 3 (eIF-3) complex. The eIF-3 complex interacts with pix.</text>
</comment>
<comment type="subcellular location">
    <subcellularLocation>
        <location evidence="1">Cytoplasm</location>
    </subcellularLocation>
    <subcellularLocation>
        <location evidence="1">Golgi apparatus</location>
    </subcellularLocation>
</comment>
<comment type="similarity">
    <text evidence="1">Belongs to the eIF-3 subunit M family.</text>
</comment>
<sequence>MTSHPVFIDLSLDEQVQELRKYFKKLGAEISSEKSNKGVEDDLHKIIGVCDVCFKDGEPSQIDGILNSIVSIMITIPLDRGENIVLAYCEKMTKAPNQPLGKVCLQSLWRLFNNLDTASPLRYHVYYHLVQVAKQCEQVLEVFTGVDQLKTQFANCPPSSEQMQKLYRLLHDVTKDTNMELSSKVMIELLGTYTADNACVAREDAMKCIVTALADPNTFLLDPLLALKPVRFLEGDLIHDLLSIFVSDKLPSYVQFYEDHKEFVNSQGLNHEQNMKKMRLLTFMQLAESNPEMTFDTLTKELQITEDEVEPFVIQVLKTKLVRARLDQANRKVHISSTMHRTFGAPQWEQLRDLLQAWKENLSSVRDGLTNVSSAQLDLARTQKLIH</sequence>
<reference key="1">
    <citation type="journal article" date="2007" name="Nature">
        <title>Evolution of genes and genomes on the Drosophila phylogeny.</title>
        <authorList>
            <consortium name="Drosophila 12 genomes consortium"/>
        </authorList>
    </citation>
    <scope>NUCLEOTIDE SEQUENCE [LARGE SCALE GENOMIC DNA]</scope>
    <source>
        <strain>MSH-3 / Tucson 14011-0111.49</strain>
    </source>
</reference>
<keyword id="KW-0963">Cytoplasm</keyword>
<keyword id="KW-0333">Golgi apparatus</keyword>
<keyword id="KW-0396">Initiation factor</keyword>
<keyword id="KW-0648">Protein biosynthesis</keyword>
<keyword id="KW-1185">Reference proteome</keyword>